<evidence type="ECO:0000255" key="1">
    <source>
        <dbReference type="HAMAP-Rule" id="MF_01887"/>
    </source>
</evidence>
<keyword id="KW-0963">Cytoplasm</keyword>
<keyword id="KW-0489">Methyltransferase</keyword>
<keyword id="KW-0698">rRNA processing</keyword>
<keyword id="KW-0949">S-adenosyl-L-methionine</keyword>
<keyword id="KW-0808">Transferase</keyword>
<protein>
    <recommendedName>
        <fullName evidence="1">23S rRNA (guanosine-2'-O-)-methyltransferase RlmB</fullName>
        <ecNumber evidence="1">2.1.1.185</ecNumber>
    </recommendedName>
    <alternativeName>
        <fullName evidence="1">23S rRNA (guanosine2251 2'-O)-methyltransferase</fullName>
    </alternativeName>
    <alternativeName>
        <fullName evidence="1">23S rRNA Gm2251 2'-O-methyltransferase</fullName>
    </alternativeName>
</protein>
<gene>
    <name evidence="1" type="primary">rlmB</name>
    <name type="ordered locus">STY4726</name>
    <name type="ordered locus">t4420</name>
</gene>
<comment type="function">
    <text evidence="1">Specifically methylates the ribose of guanosine 2251 in 23S rRNA.</text>
</comment>
<comment type="catalytic activity">
    <reaction evidence="1">
        <text>guanosine(2251) in 23S rRNA + S-adenosyl-L-methionine = 2'-O-methylguanosine(2251) in 23S rRNA + S-adenosyl-L-homocysteine + H(+)</text>
        <dbReference type="Rhea" id="RHEA:24140"/>
        <dbReference type="Rhea" id="RHEA-COMP:10239"/>
        <dbReference type="Rhea" id="RHEA-COMP:10241"/>
        <dbReference type="ChEBI" id="CHEBI:15378"/>
        <dbReference type="ChEBI" id="CHEBI:57856"/>
        <dbReference type="ChEBI" id="CHEBI:59789"/>
        <dbReference type="ChEBI" id="CHEBI:74269"/>
        <dbReference type="ChEBI" id="CHEBI:74445"/>
        <dbReference type="EC" id="2.1.1.185"/>
    </reaction>
</comment>
<comment type="subunit">
    <text evidence="1">Homodimer.</text>
</comment>
<comment type="subcellular location">
    <subcellularLocation>
        <location evidence="1">Cytoplasm</location>
    </subcellularLocation>
</comment>
<comment type="similarity">
    <text evidence="1">Belongs to the class IV-like SAM-binding methyltransferase superfamily. RNA methyltransferase TrmH family. RlmB subfamily.</text>
</comment>
<organism>
    <name type="scientific">Salmonella typhi</name>
    <dbReference type="NCBI Taxonomy" id="90370"/>
    <lineage>
        <taxon>Bacteria</taxon>
        <taxon>Pseudomonadati</taxon>
        <taxon>Pseudomonadota</taxon>
        <taxon>Gammaproteobacteria</taxon>
        <taxon>Enterobacterales</taxon>
        <taxon>Enterobacteriaceae</taxon>
        <taxon>Salmonella</taxon>
    </lineage>
</organism>
<name>RLMB_SALTI</name>
<reference key="1">
    <citation type="journal article" date="2001" name="Nature">
        <title>Complete genome sequence of a multiple drug resistant Salmonella enterica serovar Typhi CT18.</title>
        <authorList>
            <person name="Parkhill J."/>
            <person name="Dougan G."/>
            <person name="James K.D."/>
            <person name="Thomson N.R."/>
            <person name="Pickard D."/>
            <person name="Wain J."/>
            <person name="Churcher C.M."/>
            <person name="Mungall K.L."/>
            <person name="Bentley S.D."/>
            <person name="Holden M.T.G."/>
            <person name="Sebaihia M."/>
            <person name="Baker S."/>
            <person name="Basham D."/>
            <person name="Brooks K."/>
            <person name="Chillingworth T."/>
            <person name="Connerton P."/>
            <person name="Cronin A."/>
            <person name="Davis P."/>
            <person name="Davies R.M."/>
            <person name="Dowd L."/>
            <person name="White N."/>
            <person name="Farrar J."/>
            <person name="Feltwell T."/>
            <person name="Hamlin N."/>
            <person name="Haque A."/>
            <person name="Hien T.T."/>
            <person name="Holroyd S."/>
            <person name="Jagels K."/>
            <person name="Krogh A."/>
            <person name="Larsen T.S."/>
            <person name="Leather S."/>
            <person name="Moule S."/>
            <person name="O'Gaora P."/>
            <person name="Parry C."/>
            <person name="Quail M.A."/>
            <person name="Rutherford K.M."/>
            <person name="Simmonds M."/>
            <person name="Skelton J."/>
            <person name="Stevens K."/>
            <person name="Whitehead S."/>
            <person name="Barrell B.G."/>
        </authorList>
    </citation>
    <scope>NUCLEOTIDE SEQUENCE [LARGE SCALE GENOMIC DNA]</scope>
    <source>
        <strain>CT18</strain>
    </source>
</reference>
<reference key="2">
    <citation type="journal article" date="2003" name="J. Bacteriol.">
        <title>Comparative genomics of Salmonella enterica serovar Typhi strains Ty2 and CT18.</title>
        <authorList>
            <person name="Deng W."/>
            <person name="Liou S.-R."/>
            <person name="Plunkett G. III"/>
            <person name="Mayhew G.F."/>
            <person name="Rose D.J."/>
            <person name="Burland V."/>
            <person name="Kodoyianni V."/>
            <person name="Schwartz D.C."/>
            <person name="Blattner F.R."/>
        </authorList>
    </citation>
    <scope>NUCLEOTIDE SEQUENCE [LARGE SCALE GENOMIC DNA]</scope>
    <source>
        <strain>ATCC 700931 / Ty2</strain>
    </source>
</reference>
<proteinExistence type="inferred from homology"/>
<dbReference type="EC" id="2.1.1.185" evidence="1"/>
<dbReference type="EMBL" id="AL513382">
    <property type="protein sequence ID" value="CAD06846.1"/>
    <property type="molecule type" value="Genomic_DNA"/>
</dbReference>
<dbReference type="EMBL" id="AE014613">
    <property type="protein sequence ID" value="AAO71869.1"/>
    <property type="molecule type" value="Genomic_DNA"/>
</dbReference>
<dbReference type="RefSeq" id="NP_458805.1">
    <property type="nucleotide sequence ID" value="NC_003198.1"/>
</dbReference>
<dbReference type="RefSeq" id="WP_001293265.1">
    <property type="nucleotide sequence ID" value="NZ_WSUR01000012.1"/>
</dbReference>
<dbReference type="SMR" id="Q8Z182"/>
<dbReference type="STRING" id="220341.gene:17588546"/>
<dbReference type="KEGG" id="stt:t4420"/>
<dbReference type="KEGG" id="sty:STY4726"/>
<dbReference type="PATRIC" id="fig|220341.7.peg.4827"/>
<dbReference type="eggNOG" id="COG0566">
    <property type="taxonomic scope" value="Bacteria"/>
</dbReference>
<dbReference type="HOGENOM" id="CLU_021322_0_1_6"/>
<dbReference type="OMA" id="QVPPYEY"/>
<dbReference type="Proteomes" id="UP000000541">
    <property type="component" value="Chromosome"/>
</dbReference>
<dbReference type="Proteomes" id="UP000002670">
    <property type="component" value="Chromosome"/>
</dbReference>
<dbReference type="GO" id="GO:0005829">
    <property type="term" value="C:cytosol"/>
    <property type="evidence" value="ECO:0007669"/>
    <property type="project" value="TreeGrafter"/>
</dbReference>
<dbReference type="GO" id="GO:0003723">
    <property type="term" value="F:RNA binding"/>
    <property type="evidence" value="ECO:0007669"/>
    <property type="project" value="InterPro"/>
</dbReference>
<dbReference type="GO" id="GO:0070039">
    <property type="term" value="F:rRNA (guanosine-2'-O-)-methyltransferase activity"/>
    <property type="evidence" value="ECO:0007669"/>
    <property type="project" value="UniProtKB-UniRule"/>
</dbReference>
<dbReference type="CDD" id="cd18103">
    <property type="entry name" value="SpoU-like_RlmB"/>
    <property type="match status" value="1"/>
</dbReference>
<dbReference type="FunFam" id="3.40.1280.10:FF:000005">
    <property type="entry name" value="23S rRNA (guanosine-2'-O-)-methyltransferase RlmB"/>
    <property type="match status" value="1"/>
</dbReference>
<dbReference type="FunFam" id="3.30.1330.30:FF:000007">
    <property type="entry name" value="23S rRNA methyltransferase"/>
    <property type="match status" value="1"/>
</dbReference>
<dbReference type="Gene3D" id="3.30.1330.30">
    <property type="match status" value="1"/>
</dbReference>
<dbReference type="Gene3D" id="3.40.1280.10">
    <property type="match status" value="1"/>
</dbReference>
<dbReference type="HAMAP" id="MF_01887">
    <property type="entry name" value="23SrRNA_methyltr_B"/>
    <property type="match status" value="1"/>
</dbReference>
<dbReference type="InterPro" id="IPR024915">
    <property type="entry name" value="23S_rRNA_MeTrfase_RlmB"/>
</dbReference>
<dbReference type="InterPro" id="IPR029028">
    <property type="entry name" value="Alpha/beta_knot_MTases"/>
</dbReference>
<dbReference type="InterPro" id="IPR029064">
    <property type="entry name" value="Ribosomal_eL30-like_sf"/>
</dbReference>
<dbReference type="InterPro" id="IPR004441">
    <property type="entry name" value="rRNA_MeTrfase_TrmH"/>
</dbReference>
<dbReference type="InterPro" id="IPR001537">
    <property type="entry name" value="SpoU_MeTrfase"/>
</dbReference>
<dbReference type="InterPro" id="IPR013123">
    <property type="entry name" value="SpoU_subst-bd"/>
</dbReference>
<dbReference type="InterPro" id="IPR029026">
    <property type="entry name" value="tRNA_m1G_MTases_N"/>
</dbReference>
<dbReference type="NCBIfam" id="NF008386">
    <property type="entry name" value="PRK11181.1"/>
    <property type="match status" value="1"/>
</dbReference>
<dbReference type="NCBIfam" id="TIGR00186">
    <property type="entry name" value="rRNA_methyl_3"/>
    <property type="match status" value="1"/>
</dbReference>
<dbReference type="PANTHER" id="PTHR46429">
    <property type="entry name" value="23S RRNA (GUANOSINE-2'-O-)-METHYLTRANSFERASE RLMB"/>
    <property type="match status" value="1"/>
</dbReference>
<dbReference type="PANTHER" id="PTHR46429:SF1">
    <property type="entry name" value="23S RRNA (GUANOSINE-2'-O-)-METHYLTRANSFERASE RLMB"/>
    <property type="match status" value="1"/>
</dbReference>
<dbReference type="Pfam" id="PF00588">
    <property type="entry name" value="SpoU_methylase"/>
    <property type="match status" value="1"/>
</dbReference>
<dbReference type="Pfam" id="PF08032">
    <property type="entry name" value="SpoU_sub_bind"/>
    <property type="match status" value="1"/>
</dbReference>
<dbReference type="SMART" id="SM00967">
    <property type="entry name" value="SpoU_sub_bind"/>
    <property type="match status" value="1"/>
</dbReference>
<dbReference type="SUPFAM" id="SSF75217">
    <property type="entry name" value="alpha/beta knot"/>
    <property type="match status" value="1"/>
</dbReference>
<dbReference type="SUPFAM" id="SSF55315">
    <property type="entry name" value="L30e-like"/>
    <property type="match status" value="1"/>
</dbReference>
<feature type="chain" id="PRO_0000159801" description="23S rRNA (guanosine-2'-O-)-methyltransferase RlmB">
    <location>
        <begin position="1"/>
        <end position="243"/>
    </location>
</feature>
<feature type="binding site" evidence="1">
    <location>
        <position position="196"/>
    </location>
    <ligand>
        <name>S-adenosyl-L-methionine</name>
        <dbReference type="ChEBI" id="CHEBI:59789"/>
    </ligand>
</feature>
<feature type="binding site" evidence="1">
    <location>
        <position position="216"/>
    </location>
    <ligand>
        <name>S-adenosyl-L-methionine</name>
        <dbReference type="ChEBI" id="CHEBI:59789"/>
    </ligand>
</feature>
<feature type="binding site" evidence="1">
    <location>
        <position position="225"/>
    </location>
    <ligand>
        <name>S-adenosyl-L-methionine</name>
        <dbReference type="ChEBI" id="CHEBI:59789"/>
    </ligand>
</feature>
<accession>Q8Z182</accession>
<accession>Q7C555</accession>
<sequence length="243" mass="26635">MSEMIYGIHAVQALLERAPERFQEAFILKGREDKRLLPLIHALESQGVVIQLANRQYLDEKSDGAVHQGIIARVKPGRQYQENDLPDLIALHDRPFLLILDGVTDPHNLGACLRSADAAGVHAVIVPKDRSAQLNATAKKVACGAAESVPLIRVTNLARTMRMLQEENIWIVGTAGEADHTLYQSKMPGRMALVMGAEGEGMRRLTREHCDELISIPMAGSVSSLNVSVATGICLFEAVRQRT</sequence>